<organism>
    <name type="scientific">Pseudothermotoga lettingae (strain ATCC BAA-301 / DSM 14385 / NBRC 107922 / TMO)</name>
    <name type="common">Thermotoga lettingae</name>
    <dbReference type="NCBI Taxonomy" id="416591"/>
    <lineage>
        <taxon>Bacteria</taxon>
        <taxon>Thermotogati</taxon>
        <taxon>Thermotogota</taxon>
        <taxon>Thermotogae</taxon>
        <taxon>Thermotogales</taxon>
        <taxon>Thermotogaceae</taxon>
        <taxon>Pseudothermotoga</taxon>
    </lineage>
</organism>
<feature type="chain" id="PRO_1000060996" description="Small ribosomal subunit protein uS19">
    <location>
        <begin position="1"/>
        <end position="95"/>
    </location>
</feature>
<feature type="region of interest" description="Disordered" evidence="2">
    <location>
        <begin position="76"/>
        <end position="95"/>
    </location>
</feature>
<sequence length="95" mass="10659">MARSRKKGPYVDPKLLKKIRMLNESGEKKIVKTWSRASTIVPEMVGHTIAVHNGLKHIPVYITENMVGHRLGEFAPTRRFGGHADKKAATKGQVR</sequence>
<comment type="function">
    <text evidence="1">Protein S19 forms a complex with S13 that binds strongly to the 16S ribosomal RNA.</text>
</comment>
<comment type="similarity">
    <text evidence="1">Belongs to the universal ribosomal protein uS19 family.</text>
</comment>
<name>RS19_PSELT</name>
<evidence type="ECO:0000255" key="1">
    <source>
        <dbReference type="HAMAP-Rule" id="MF_00531"/>
    </source>
</evidence>
<evidence type="ECO:0000256" key="2">
    <source>
        <dbReference type="SAM" id="MobiDB-lite"/>
    </source>
</evidence>
<evidence type="ECO:0000305" key="3"/>
<gene>
    <name evidence="1" type="primary">rpsS</name>
    <name type="ordered locus">Tlet_0583</name>
</gene>
<keyword id="KW-1185">Reference proteome</keyword>
<keyword id="KW-0687">Ribonucleoprotein</keyword>
<keyword id="KW-0689">Ribosomal protein</keyword>
<keyword id="KW-0694">RNA-binding</keyword>
<keyword id="KW-0699">rRNA-binding</keyword>
<accession>A8F4R5</accession>
<protein>
    <recommendedName>
        <fullName evidence="1">Small ribosomal subunit protein uS19</fullName>
    </recommendedName>
    <alternativeName>
        <fullName evidence="3">30S ribosomal protein S19</fullName>
    </alternativeName>
</protein>
<proteinExistence type="inferred from homology"/>
<reference key="1">
    <citation type="submission" date="2007-08" db="EMBL/GenBank/DDBJ databases">
        <title>Complete sequence of Thermotoga lettingae TMO.</title>
        <authorList>
            <consortium name="US DOE Joint Genome Institute"/>
            <person name="Copeland A."/>
            <person name="Lucas S."/>
            <person name="Lapidus A."/>
            <person name="Barry K."/>
            <person name="Glavina del Rio T."/>
            <person name="Dalin E."/>
            <person name="Tice H."/>
            <person name="Pitluck S."/>
            <person name="Foster B."/>
            <person name="Bruce D."/>
            <person name="Schmutz J."/>
            <person name="Larimer F."/>
            <person name="Land M."/>
            <person name="Hauser L."/>
            <person name="Kyrpides N."/>
            <person name="Mikhailova N."/>
            <person name="Nelson K."/>
            <person name="Gogarten J.P."/>
            <person name="Noll K."/>
            <person name="Richardson P."/>
        </authorList>
    </citation>
    <scope>NUCLEOTIDE SEQUENCE [LARGE SCALE GENOMIC DNA]</scope>
    <source>
        <strain>ATCC BAA-301 / DSM 14385 / NBRC 107922 / TMO</strain>
    </source>
</reference>
<dbReference type="EMBL" id="CP000812">
    <property type="protein sequence ID" value="ABV33149.1"/>
    <property type="molecule type" value="Genomic_DNA"/>
</dbReference>
<dbReference type="RefSeq" id="WP_012002630.1">
    <property type="nucleotide sequence ID" value="NZ_BSDV01000001.1"/>
</dbReference>
<dbReference type="SMR" id="A8F4R5"/>
<dbReference type="STRING" id="416591.Tlet_0583"/>
<dbReference type="KEGG" id="tle:Tlet_0583"/>
<dbReference type="eggNOG" id="COG0185">
    <property type="taxonomic scope" value="Bacteria"/>
</dbReference>
<dbReference type="HOGENOM" id="CLU_144911_0_1_0"/>
<dbReference type="OrthoDB" id="9797833at2"/>
<dbReference type="Proteomes" id="UP000002016">
    <property type="component" value="Chromosome"/>
</dbReference>
<dbReference type="GO" id="GO:0005737">
    <property type="term" value="C:cytoplasm"/>
    <property type="evidence" value="ECO:0007669"/>
    <property type="project" value="UniProtKB-ARBA"/>
</dbReference>
<dbReference type="GO" id="GO:0015935">
    <property type="term" value="C:small ribosomal subunit"/>
    <property type="evidence" value="ECO:0007669"/>
    <property type="project" value="InterPro"/>
</dbReference>
<dbReference type="GO" id="GO:0019843">
    <property type="term" value="F:rRNA binding"/>
    <property type="evidence" value="ECO:0007669"/>
    <property type="project" value="UniProtKB-UniRule"/>
</dbReference>
<dbReference type="GO" id="GO:0003735">
    <property type="term" value="F:structural constituent of ribosome"/>
    <property type="evidence" value="ECO:0007669"/>
    <property type="project" value="InterPro"/>
</dbReference>
<dbReference type="GO" id="GO:0000028">
    <property type="term" value="P:ribosomal small subunit assembly"/>
    <property type="evidence" value="ECO:0007669"/>
    <property type="project" value="TreeGrafter"/>
</dbReference>
<dbReference type="GO" id="GO:0006412">
    <property type="term" value="P:translation"/>
    <property type="evidence" value="ECO:0007669"/>
    <property type="project" value="UniProtKB-UniRule"/>
</dbReference>
<dbReference type="FunFam" id="3.30.860.10:FF:000001">
    <property type="entry name" value="30S ribosomal protein S19"/>
    <property type="match status" value="1"/>
</dbReference>
<dbReference type="Gene3D" id="3.30.860.10">
    <property type="entry name" value="30s Ribosomal Protein S19, Chain A"/>
    <property type="match status" value="1"/>
</dbReference>
<dbReference type="HAMAP" id="MF_00531">
    <property type="entry name" value="Ribosomal_uS19"/>
    <property type="match status" value="1"/>
</dbReference>
<dbReference type="InterPro" id="IPR002222">
    <property type="entry name" value="Ribosomal_uS19"/>
</dbReference>
<dbReference type="InterPro" id="IPR005732">
    <property type="entry name" value="Ribosomal_uS19_bac-type"/>
</dbReference>
<dbReference type="InterPro" id="IPR023575">
    <property type="entry name" value="Ribosomal_uS19_SF"/>
</dbReference>
<dbReference type="NCBIfam" id="TIGR01050">
    <property type="entry name" value="rpsS_bact"/>
    <property type="match status" value="1"/>
</dbReference>
<dbReference type="PANTHER" id="PTHR11880">
    <property type="entry name" value="RIBOSOMAL PROTEIN S19P FAMILY MEMBER"/>
    <property type="match status" value="1"/>
</dbReference>
<dbReference type="PANTHER" id="PTHR11880:SF8">
    <property type="entry name" value="SMALL RIBOSOMAL SUBUNIT PROTEIN US19M"/>
    <property type="match status" value="1"/>
</dbReference>
<dbReference type="Pfam" id="PF00203">
    <property type="entry name" value="Ribosomal_S19"/>
    <property type="match status" value="1"/>
</dbReference>
<dbReference type="PIRSF" id="PIRSF002144">
    <property type="entry name" value="Ribosomal_S19"/>
    <property type="match status" value="1"/>
</dbReference>
<dbReference type="PRINTS" id="PR00975">
    <property type="entry name" value="RIBOSOMALS19"/>
</dbReference>
<dbReference type="SUPFAM" id="SSF54570">
    <property type="entry name" value="Ribosomal protein S19"/>
    <property type="match status" value="1"/>
</dbReference>